<dbReference type="EMBL" id="AM884177">
    <property type="protein sequence ID" value="CAP07179.1"/>
    <property type="molecule type" value="Genomic_DNA"/>
</dbReference>
<dbReference type="RefSeq" id="WP_009871889.1">
    <property type="nucleotide sequence ID" value="NC_010280.2"/>
</dbReference>
<dbReference type="SMR" id="B0BCG4"/>
<dbReference type="KEGG" id="ctl:CTLon_0782"/>
<dbReference type="HOGENOM" id="CLU_036235_2_1_0"/>
<dbReference type="Proteomes" id="UP001154401">
    <property type="component" value="Chromosome"/>
</dbReference>
<dbReference type="GO" id="GO:0015934">
    <property type="term" value="C:large ribosomal subunit"/>
    <property type="evidence" value="ECO:0007669"/>
    <property type="project" value="InterPro"/>
</dbReference>
<dbReference type="GO" id="GO:0019843">
    <property type="term" value="F:rRNA binding"/>
    <property type="evidence" value="ECO:0007669"/>
    <property type="project" value="UniProtKB-UniRule"/>
</dbReference>
<dbReference type="GO" id="GO:0003735">
    <property type="term" value="F:structural constituent of ribosome"/>
    <property type="evidence" value="ECO:0007669"/>
    <property type="project" value="InterPro"/>
</dbReference>
<dbReference type="GO" id="GO:0016740">
    <property type="term" value="F:transferase activity"/>
    <property type="evidence" value="ECO:0007669"/>
    <property type="project" value="InterPro"/>
</dbReference>
<dbReference type="GO" id="GO:0002181">
    <property type="term" value="P:cytoplasmic translation"/>
    <property type="evidence" value="ECO:0007669"/>
    <property type="project" value="TreeGrafter"/>
</dbReference>
<dbReference type="FunFam" id="2.30.30.30:FF:000001">
    <property type="entry name" value="50S ribosomal protein L2"/>
    <property type="match status" value="1"/>
</dbReference>
<dbReference type="FunFam" id="2.40.50.140:FF:000003">
    <property type="entry name" value="50S ribosomal protein L2"/>
    <property type="match status" value="1"/>
</dbReference>
<dbReference type="FunFam" id="4.10.950.10:FF:000001">
    <property type="entry name" value="50S ribosomal protein L2"/>
    <property type="match status" value="1"/>
</dbReference>
<dbReference type="Gene3D" id="2.30.30.30">
    <property type="match status" value="1"/>
</dbReference>
<dbReference type="Gene3D" id="2.40.50.140">
    <property type="entry name" value="Nucleic acid-binding proteins"/>
    <property type="match status" value="1"/>
</dbReference>
<dbReference type="Gene3D" id="4.10.950.10">
    <property type="entry name" value="Ribosomal protein L2, domain 3"/>
    <property type="match status" value="1"/>
</dbReference>
<dbReference type="HAMAP" id="MF_01320_B">
    <property type="entry name" value="Ribosomal_uL2_B"/>
    <property type="match status" value="1"/>
</dbReference>
<dbReference type="InterPro" id="IPR012340">
    <property type="entry name" value="NA-bd_OB-fold"/>
</dbReference>
<dbReference type="InterPro" id="IPR014722">
    <property type="entry name" value="Rib_uL2_dom2"/>
</dbReference>
<dbReference type="InterPro" id="IPR002171">
    <property type="entry name" value="Ribosomal_uL2"/>
</dbReference>
<dbReference type="InterPro" id="IPR005880">
    <property type="entry name" value="Ribosomal_uL2_bac/org-type"/>
</dbReference>
<dbReference type="InterPro" id="IPR022669">
    <property type="entry name" value="Ribosomal_uL2_C"/>
</dbReference>
<dbReference type="InterPro" id="IPR022671">
    <property type="entry name" value="Ribosomal_uL2_CS"/>
</dbReference>
<dbReference type="InterPro" id="IPR014726">
    <property type="entry name" value="Ribosomal_uL2_dom3"/>
</dbReference>
<dbReference type="InterPro" id="IPR022666">
    <property type="entry name" value="Ribosomal_uL2_RNA-bd_dom"/>
</dbReference>
<dbReference type="InterPro" id="IPR008991">
    <property type="entry name" value="Translation_prot_SH3-like_sf"/>
</dbReference>
<dbReference type="NCBIfam" id="TIGR01171">
    <property type="entry name" value="rplB_bact"/>
    <property type="match status" value="1"/>
</dbReference>
<dbReference type="PANTHER" id="PTHR13691:SF5">
    <property type="entry name" value="LARGE RIBOSOMAL SUBUNIT PROTEIN UL2M"/>
    <property type="match status" value="1"/>
</dbReference>
<dbReference type="PANTHER" id="PTHR13691">
    <property type="entry name" value="RIBOSOMAL PROTEIN L2"/>
    <property type="match status" value="1"/>
</dbReference>
<dbReference type="Pfam" id="PF00181">
    <property type="entry name" value="Ribosomal_L2"/>
    <property type="match status" value="1"/>
</dbReference>
<dbReference type="Pfam" id="PF03947">
    <property type="entry name" value="Ribosomal_L2_C"/>
    <property type="match status" value="1"/>
</dbReference>
<dbReference type="PIRSF" id="PIRSF002158">
    <property type="entry name" value="Ribosomal_L2"/>
    <property type="match status" value="1"/>
</dbReference>
<dbReference type="SMART" id="SM01383">
    <property type="entry name" value="Ribosomal_L2"/>
    <property type="match status" value="1"/>
</dbReference>
<dbReference type="SMART" id="SM01382">
    <property type="entry name" value="Ribosomal_L2_C"/>
    <property type="match status" value="1"/>
</dbReference>
<dbReference type="SUPFAM" id="SSF50249">
    <property type="entry name" value="Nucleic acid-binding proteins"/>
    <property type="match status" value="1"/>
</dbReference>
<dbReference type="SUPFAM" id="SSF50104">
    <property type="entry name" value="Translation proteins SH3-like domain"/>
    <property type="match status" value="1"/>
</dbReference>
<dbReference type="PROSITE" id="PS00467">
    <property type="entry name" value="RIBOSOMAL_L2"/>
    <property type="match status" value="1"/>
</dbReference>
<gene>
    <name evidence="1" type="primary">rplB</name>
    <name type="ordered locus">CTLon_0782</name>
</gene>
<comment type="function">
    <text evidence="1">One of the primary rRNA binding proteins. Required for association of the 30S and 50S subunits to form the 70S ribosome, for tRNA binding and peptide bond formation. It has been suggested to have peptidyltransferase activity; this is somewhat controversial. Makes several contacts with the 16S rRNA in the 70S ribosome.</text>
</comment>
<comment type="subunit">
    <text evidence="1">Part of the 50S ribosomal subunit. Forms a bridge to the 30S subunit in the 70S ribosome.</text>
</comment>
<comment type="similarity">
    <text evidence="1">Belongs to the universal ribosomal protein uL2 family.</text>
</comment>
<reference key="1">
    <citation type="journal article" date="2008" name="Genome Res.">
        <title>Chlamydia trachomatis: genome sequence analysis of lymphogranuloma venereum isolates.</title>
        <authorList>
            <person name="Thomson N.R."/>
            <person name="Holden M.T.G."/>
            <person name="Carder C."/>
            <person name="Lennard N."/>
            <person name="Lockey S.J."/>
            <person name="Marsh P."/>
            <person name="Skipp P."/>
            <person name="O'Connor C.D."/>
            <person name="Goodhead I."/>
            <person name="Norbertzcak H."/>
            <person name="Harris B."/>
            <person name="Ormond D."/>
            <person name="Rance R."/>
            <person name="Quail M.A."/>
            <person name="Parkhill J."/>
            <person name="Stephens R.S."/>
            <person name="Clarke I.N."/>
        </authorList>
    </citation>
    <scope>NUCLEOTIDE SEQUENCE [LARGE SCALE GENOMIC DNA]</scope>
    <source>
        <strain>UCH-1/proctitis</strain>
    </source>
</reference>
<evidence type="ECO:0000255" key="1">
    <source>
        <dbReference type="HAMAP-Rule" id="MF_01320"/>
    </source>
</evidence>
<evidence type="ECO:0000256" key="2">
    <source>
        <dbReference type="SAM" id="MobiDB-lite"/>
    </source>
</evidence>
<evidence type="ECO:0000305" key="3"/>
<keyword id="KW-0687">Ribonucleoprotein</keyword>
<keyword id="KW-0689">Ribosomal protein</keyword>
<keyword id="KW-0694">RNA-binding</keyword>
<keyword id="KW-0699">rRNA-binding</keyword>
<sequence>MFKKFKPVTPGTRQLILPSFDELTTQGELKGSSSRRSVRPNKKLSFFKKSSGGRDNLGHISCRHRGGGVRRHYRVIDFKRNKDGIEAKVASVEYDPNRSAYIALLNYVDGEKRYILAPKGIKRGDRVISGEGSPFKTGCCMTLKSIPLGLSVHNVEMRPGSGGKLVRSAGLSAQIIAKTAGYVTLKMPSGEFRMLNEMCRATVGEVSNADHNLCVDGKAGRRRWKGIRPTVRGTAMNPVDHPHGGGEGRHNGYISQTPWGKVTKGLKTRDKRKSNKWIVKDRRK</sequence>
<name>RL2_CHLTB</name>
<protein>
    <recommendedName>
        <fullName evidence="1">Large ribosomal subunit protein uL2</fullName>
    </recommendedName>
    <alternativeName>
        <fullName evidence="3">50S ribosomal protein L2</fullName>
    </alternativeName>
</protein>
<accession>B0BCG4</accession>
<feature type="chain" id="PRO_1000141526" description="Large ribosomal subunit protein uL2">
    <location>
        <begin position="1"/>
        <end position="284"/>
    </location>
</feature>
<feature type="region of interest" description="Disordered" evidence="2">
    <location>
        <begin position="28"/>
        <end position="50"/>
    </location>
</feature>
<feature type="region of interest" description="Disordered" evidence="2">
    <location>
        <begin position="232"/>
        <end position="284"/>
    </location>
</feature>
<feature type="compositionally biased region" description="Basic residues" evidence="2">
    <location>
        <begin position="36"/>
        <end position="46"/>
    </location>
</feature>
<feature type="compositionally biased region" description="Basic and acidic residues" evidence="2">
    <location>
        <begin position="240"/>
        <end position="250"/>
    </location>
</feature>
<feature type="compositionally biased region" description="Basic residues" evidence="2">
    <location>
        <begin position="264"/>
        <end position="284"/>
    </location>
</feature>
<proteinExistence type="inferred from homology"/>
<organism>
    <name type="scientific">Chlamydia trachomatis serovar L2b (strain UCH-1/proctitis)</name>
    <dbReference type="NCBI Taxonomy" id="471473"/>
    <lineage>
        <taxon>Bacteria</taxon>
        <taxon>Pseudomonadati</taxon>
        <taxon>Chlamydiota</taxon>
        <taxon>Chlamydiia</taxon>
        <taxon>Chlamydiales</taxon>
        <taxon>Chlamydiaceae</taxon>
        <taxon>Chlamydia/Chlamydophila group</taxon>
        <taxon>Chlamydia</taxon>
    </lineage>
</organism>